<accession>P63114</accession>
<accession>P02158</accession>
<reference key="1">
    <citation type="journal article" date="1976" name="Biochim. Biophys. Acta">
        <title>Comparison of the myoglobin of the bat-eared fox (Otocyon megalotis) with that of the domestic dog (Canis familiaris).</title>
        <authorList>
            <person name="Darbre P.D."/>
            <person name="Lehmann H."/>
        </authorList>
    </citation>
    <scope>PROTEIN SEQUENCE OF 2-154</scope>
</reference>
<dbReference type="EC" id="1.7.-.-" evidence="1"/>
<dbReference type="EC" id="1.11.1.-" evidence="1"/>
<dbReference type="PIR" id="A90611">
    <property type="entry name" value="MYFXBE"/>
</dbReference>
<dbReference type="SMR" id="P63114"/>
<dbReference type="GO" id="GO:0070062">
    <property type="term" value="C:extracellular exosome"/>
    <property type="evidence" value="ECO:0007669"/>
    <property type="project" value="TreeGrafter"/>
</dbReference>
<dbReference type="GO" id="GO:0016528">
    <property type="term" value="C:sarcoplasm"/>
    <property type="evidence" value="ECO:0000250"/>
    <property type="project" value="UniProtKB"/>
</dbReference>
<dbReference type="GO" id="GO:0020037">
    <property type="term" value="F:heme binding"/>
    <property type="evidence" value="ECO:0007669"/>
    <property type="project" value="InterPro"/>
</dbReference>
<dbReference type="GO" id="GO:0046872">
    <property type="term" value="F:metal ion binding"/>
    <property type="evidence" value="ECO:0007669"/>
    <property type="project" value="UniProtKB-KW"/>
</dbReference>
<dbReference type="GO" id="GO:0098809">
    <property type="term" value="F:nitrite reductase activity"/>
    <property type="evidence" value="ECO:0000250"/>
    <property type="project" value="UniProtKB"/>
</dbReference>
<dbReference type="GO" id="GO:0019825">
    <property type="term" value="F:oxygen binding"/>
    <property type="evidence" value="ECO:0007669"/>
    <property type="project" value="InterPro"/>
</dbReference>
<dbReference type="GO" id="GO:0005344">
    <property type="term" value="F:oxygen carrier activity"/>
    <property type="evidence" value="ECO:0000250"/>
    <property type="project" value="UniProtKB"/>
</dbReference>
<dbReference type="GO" id="GO:0004601">
    <property type="term" value="F:peroxidase activity"/>
    <property type="evidence" value="ECO:0000250"/>
    <property type="project" value="UniProtKB"/>
</dbReference>
<dbReference type="GO" id="GO:0019430">
    <property type="term" value="P:removal of superoxide radicals"/>
    <property type="evidence" value="ECO:0000250"/>
    <property type="project" value="UniProtKB"/>
</dbReference>
<dbReference type="Gene3D" id="6.10.140.2100">
    <property type="match status" value="1"/>
</dbReference>
<dbReference type="Gene3D" id="6.10.140.2110">
    <property type="match status" value="1"/>
</dbReference>
<dbReference type="InterPro" id="IPR000971">
    <property type="entry name" value="Globin"/>
</dbReference>
<dbReference type="InterPro" id="IPR009050">
    <property type="entry name" value="Globin-like_sf"/>
</dbReference>
<dbReference type="InterPro" id="IPR002335">
    <property type="entry name" value="Myoglobin"/>
</dbReference>
<dbReference type="PANTHER" id="PTHR47132">
    <property type="entry name" value="MYOGLOBIN"/>
    <property type="match status" value="1"/>
</dbReference>
<dbReference type="PANTHER" id="PTHR47132:SF1">
    <property type="entry name" value="MYOGLOBIN"/>
    <property type="match status" value="1"/>
</dbReference>
<dbReference type="Pfam" id="PF00042">
    <property type="entry name" value="Globin"/>
    <property type="match status" value="1"/>
</dbReference>
<dbReference type="PRINTS" id="PR00613">
    <property type="entry name" value="MYOGLOBIN"/>
</dbReference>
<dbReference type="SUPFAM" id="SSF46458">
    <property type="entry name" value="Globin-like"/>
    <property type="match status" value="1"/>
</dbReference>
<dbReference type="PROSITE" id="PS01033">
    <property type="entry name" value="GLOBIN"/>
    <property type="match status" value="1"/>
</dbReference>
<gene>
    <name type="primary">MB</name>
</gene>
<name>MYG_OTOME</name>
<keyword id="KW-0963">Cytoplasm</keyword>
<keyword id="KW-0903">Direct protein sequencing</keyword>
<keyword id="KW-0349">Heme</keyword>
<keyword id="KW-0408">Iron</keyword>
<keyword id="KW-0479">Metal-binding</keyword>
<keyword id="KW-0514">Muscle protein</keyword>
<keyword id="KW-0560">Oxidoreductase</keyword>
<keyword id="KW-0561">Oxygen transport</keyword>
<keyword id="KW-0597">Phosphoprotein</keyword>
<keyword id="KW-0813">Transport</keyword>
<organism>
    <name type="scientific">Otocyon megalotis</name>
    <name type="common">Bat-eared fox</name>
    <dbReference type="NCBI Taxonomy" id="9624"/>
    <lineage>
        <taxon>Eukaryota</taxon>
        <taxon>Metazoa</taxon>
        <taxon>Chordata</taxon>
        <taxon>Craniata</taxon>
        <taxon>Vertebrata</taxon>
        <taxon>Euteleostomi</taxon>
        <taxon>Mammalia</taxon>
        <taxon>Eutheria</taxon>
        <taxon>Laurasiatheria</taxon>
        <taxon>Carnivora</taxon>
        <taxon>Caniformia</taxon>
        <taxon>Canidae</taxon>
        <taxon>Otocyon</taxon>
    </lineage>
</organism>
<evidence type="ECO:0000250" key="1">
    <source>
        <dbReference type="UniProtKB" id="P02144"/>
    </source>
</evidence>
<evidence type="ECO:0000250" key="2">
    <source>
        <dbReference type="UniProtKB" id="P02185"/>
    </source>
</evidence>
<evidence type="ECO:0000250" key="3">
    <source>
        <dbReference type="UniProtKB" id="P02189"/>
    </source>
</evidence>
<evidence type="ECO:0000250" key="4">
    <source>
        <dbReference type="UniProtKB" id="P04247"/>
    </source>
</evidence>
<evidence type="ECO:0000250" key="5">
    <source>
        <dbReference type="UniProtKB" id="P68082"/>
    </source>
</evidence>
<evidence type="ECO:0000250" key="6">
    <source>
        <dbReference type="UniProtKB" id="Q9QZ76"/>
    </source>
</evidence>
<evidence type="ECO:0000255" key="7">
    <source>
        <dbReference type="PROSITE-ProRule" id="PRU00238"/>
    </source>
</evidence>
<evidence type="ECO:0000269" key="8">
    <source>
    </source>
</evidence>
<feature type="initiator methionine" description="Removed" evidence="8">
    <location>
        <position position="1"/>
    </location>
</feature>
<feature type="chain" id="PRO_0000053327" description="Myoglobin">
    <location>
        <begin position="2"/>
        <end position="154"/>
    </location>
</feature>
<feature type="domain" description="Globin" evidence="7">
    <location>
        <begin position="2"/>
        <end position="148"/>
    </location>
</feature>
<feature type="binding site" evidence="5">
    <location>
        <position position="65"/>
    </location>
    <ligand>
        <name>nitrite</name>
        <dbReference type="ChEBI" id="CHEBI:16301"/>
    </ligand>
</feature>
<feature type="binding site" evidence="3 7">
    <location>
        <position position="65"/>
    </location>
    <ligand>
        <name>O2</name>
        <dbReference type="ChEBI" id="CHEBI:15379"/>
    </ligand>
</feature>
<feature type="binding site" description="proximal binding residue" evidence="1">
    <location>
        <position position="94"/>
    </location>
    <ligand>
        <name>heme b</name>
        <dbReference type="ChEBI" id="CHEBI:60344"/>
    </ligand>
    <ligandPart>
        <name>Fe</name>
        <dbReference type="ChEBI" id="CHEBI:18248"/>
    </ligandPart>
</feature>
<feature type="modified residue" description="Phosphoserine" evidence="6">
    <location>
        <position position="4"/>
    </location>
</feature>
<feature type="modified residue" description="Phosphothreonine" evidence="4">
    <location>
        <position position="68"/>
    </location>
</feature>
<sequence length="154" mass="17337">MGLSDGEWQIVLNIWGKVETDLAGHGQEVLIRLFKNHPETLDKFDKFKHLKTEDEMKGSEDLKKHGNTVLTALGGILKKKGHHEAELKPLAQSHATKHKIPVKYLEFISDAIIQVLQSKHSGDFHADTEAAMKKALELFRNDIAAKYKELGFQG</sequence>
<proteinExistence type="evidence at protein level"/>
<protein>
    <recommendedName>
        <fullName>Myoglobin</fullName>
    </recommendedName>
    <alternativeName>
        <fullName evidence="1">Nitrite reductase MB</fullName>
        <ecNumber evidence="1">1.7.-.-</ecNumber>
    </alternativeName>
    <alternativeName>
        <fullName evidence="1">Pseudoperoxidase MB</fullName>
        <ecNumber evidence="1">1.11.1.-</ecNumber>
    </alternativeName>
</protein>
<comment type="function">
    <text evidence="1">Monomeric heme protein which primary function is to store oxygen and facilitate its diffusion within muscle tissues. Reversibly binds oxygen through a pentacoordinated heme iron and enables its timely and efficient release as needed during periods of heightened demand. Depending on the oxidative conditions of tissues and cells, and in addition to its ability to bind oxygen, it also has a nitrite reductase activity whereby it regulates the production of bioactive nitric oxide. Under stress conditions, like hypoxia and anoxia, it also protects cells against reactive oxygen species thanks to its pseudoperoxidase activity.</text>
</comment>
<comment type="catalytic activity">
    <reaction evidence="1">
        <text>Fe(III)-heme b-[protein] + nitric oxide + H2O = Fe(II)-heme b-[protein] + nitrite + 2 H(+)</text>
        <dbReference type="Rhea" id="RHEA:77711"/>
        <dbReference type="Rhea" id="RHEA-COMP:18975"/>
        <dbReference type="Rhea" id="RHEA-COMP:18976"/>
        <dbReference type="ChEBI" id="CHEBI:15377"/>
        <dbReference type="ChEBI" id="CHEBI:15378"/>
        <dbReference type="ChEBI" id="CHEBI:16301"/>
        <dbReference type="ChEBI" id="CHEBI:16480"/>
        <dbReference type="ChEBI" id="CHEBI:55376"/>
        <dbReference type="ChEBI" id="CHEBI:60344"/>
    </reaction>
    <physiologicalReaction direction="right-to-left" evidence="1">
        <dbReference type="Rhea" id="RHEA:77713"/>
    </physiologicalReaction>
</comment>
<comment type="catalytic activity">
    <reaction evidence="1">
        <text>H2O2 + AH2 = A + 2 H2O</text>
        <dbReference type="Rhea" id="RHEA:30275"/>
        <dbReference type="ChEBI" id="CHEBI:13193"/>
        <dbReference type="ChEBI" id="CHEBI:15377"/>
        <dbReference type="ChEBI" id="CHEBI:16240"/>
        <dbReference type="ChEBI" id="CHEBI:17499"/>
    </reaction>
</comment>
<comment type="subunit">
    <text evidence="2">Monomeric.</text>
</comment>
<comment type="subcellular location">
    <subcellularLocation>
        <location evidence="1">Cytoplasm</location>
        <location evidence="1">Sarcoplasm</location>
    </subcellularLocation>
</comment>
<comment type="similarity">
    <text evidence="7">Belongs to the globin family.</text>
</comment>